<name>KLC1_HUMAN</name>
<comment type="function">
    <text evidence="2 6">Kinesin is a microtubule-associated force-producing protein that may play a role in organelle transport (PubMed:21385839). The light chain may function in coupling of cargo to the heavy chain or in the modulation of its ATPase activity (By similarity).</text>
</comment>
<comment type="subunit">
    <text evidence="2 4 6 8">Oligomeric complex composed of two heavy chains and two light chains. Interacts with SPAG9 (By similarity). Interacts with ATCAY; may link mitochondria to KLC1 and regulate mitochondria localization into neuron projections (By similarity). Interacts (via TPR repeats) with TOR1A; the interaction associates TOR1A with the kinesin oligomeric complex (PubMed:14970196). Interacts with BORCS5 (PubMed:25898167). Interacts with MAPK8IP3/JIP3 and NTRK2/TRKB; interaction with NTRK2/TRKB is mediated by MAPK8IP3/JIP3 (By similarity). Interacts with CLSTN1; phosphorylation at Ser-460 inhibits interaction with CLSTN1 (PubMed:21385839).</text>
</comment>
<comment type="subunit">
    <text evidence="7">(Microbial infection) Interacts with adenovirus hexon-interlacing protein; this interaction leads to capsid disruption at the nuclear pore complex during virus entry into host cell.</text>
</comment>
<comment type="interaction">
    <interactant intactId="EBI-721019">
        <id>Q07866</id>
    </interactant>
    <interactant intactId="EBI-752094">
        <id>Q12982</id>
        <label>BNIP2</label>
    </interactant>
    <organismsDiffer>false</organismsDiffer>
    <experiments>3</experiments>
</comment>
<comment type="interaction">
    <interactant intactId="EBI-721019">
        <id>Q07866</id>
    </interactant>
    <interactant intactId="EBI-948001">
        <id>Q15323</id>
        <label>KRT31</label>
    </interactant>
    <organismsDiffer>false</organismsDiffer>
    <experiments>3</experiments>
</comment>
<comment type="interaction">
    <interactant intactId="EBI-721019">
        <id>Q07866</id>
    </interactant>
    <interactant intactId="EBI-10173858">
        <id>Q96M63</id>
        <label>ODAD1</label>
    </interactant>
    <organismsDiffer>false</organismsDiffer>
    <experiments>3</experiments>
</comment>
<comment type="interaction">
    <interactant intactId="EBI-721019">
        <id>Q07866</id>
    </interactant>
    <interactant intactId="EBI-25475856">
        <id>P0DTC9</id>
        <label>N</label>
    </interactant>
    <organismsDiffer>true</organismsDiffer>
    <experiments>4</experiments>
</comment>
<comment type="interaction">
    <interactant intactId="EBI-721019">
        <id>Q07866</id>
    </interactant>
    <interactant intactId="EBI-15598815">
        <id>Q8ZMM8</id>
        <label>pipB2</label>
    </interactant>
    <organismsDiffer>true</organismsDiffer>
    <experiments>4</experiments>
</comment>
<comment type="interaction">
    <interactant intactId="EBI-11979975">
        <id>Q07866-2</id>
    </interactant>
    <interactant intactId="EBI-12016808">
        <id>Q63HQ0-2</id>
        <label>AP1AR</label>
    </interactant>
    <organismsDiffer>false</organismsDiffer>
    <experiments>3</experiments>
</comment>
<comment type="interaction">
    <interactant intactId="EBI-11979975">
        <id>Q07866-2</id>
    </interactant>
    <interactant intactId="EBI-77613">
        <id>P05067</id>
        <label>APP</label>
    </interactant>
    <organismsDiffer>false</organismsDiffer>
    <experiments>3</experiments>
</comment>
<comment type="interaction">
    <interactant intactId="EBI-11979975">
        <id>Q07866-2</id>
    </interactant>
    <interactant intactId="EBI-1783328">
        <id>Q86WG3</id>
        <label>ATCAY</label>
    </interactant>
    <organismsDiffer>false</organismsDiffer>
    <experiments>3</experiments>
</comment>
<comment type="interaction">
    <interactant intactId="EBI-11979975">
        <id>Q07866-2</id>
    </interactant>
    <interactant intactId="EBI-752094">
        <id>Q12982</id>
        <label>BNIP2</label>
    </interactant>
    <organismsDiffer>false</organismsDiffer>
    <experiments>3</experiments>
</comment>
<comment type="interaction">
    <interactant intactId="EBI-11979975">
        <id>Q07866-2</id>
    </interactant>
    <interactant intactId="EBI-717887">
        <id>Q9UPT6</id>
        <label>MAPK8IP3</label>
    </interactant>
    <organismsDiffer>false</organismsDiffer>
    <experiments>3</experiments>
</comment>
<comment type="interaction">
    <interactant intactId="EBI-11979975">
        <id>Q07866-2</id>
    </interactant>
    <interactant intactId="EBI-2554984">
        <id>Q9Y6A5</id>
        <label>TACC3</label>
    </interactant>
    <organismsDiffer>false</organismsDiffer>
    <experiments>3</experiments>
</comment>
<comment type="subcellular location">
    <subcellularLocation>
        <location evidence="2">Cell projection</location>
        <location evidence="2">Growth cone</location>
    </subcellularLocation>
    <subcellularLocation>
        <location evidence="6">Cytoplasmic vesicle</location>
    </subcellularLocation>
    <subcellularLocation>
        <location evidence="12">Cytoplasm</location>
        <location evidence="12">Cytoskeleton</location>
    </subcellularLocation>
</comment>
<comment type="alternative products">
    <event type="alternative splicing"/>
    <isoform>
        <id>Q07866-1</id>
        <name>A</name>
        <sequence type="displayed"/>
    </isoform>
    <isoform>
        <id>Q07866-2</id>
        <name>C</name>
        <name>KLC1C</name>
        <name>R</name>
        <name>KLC1R</name>
        <sequence type="described" ref="VSP_008018"/>
    </isoform>
    <isoform>
        <id>Q07866-3</id>
        <name>G</name>
        <name>KLC1G</name>
        <sequence type="described" ref="VSP_008017"/>
    </isoform>
    <isoform>
        <id>Q07866-4</id>
        <name>J</name>
        <name>KLC1J</name>
        <sequence type="described" ref="VSP_008019 VSP_008020"/>
    </isoform>
    <isoform>
        <id>Q07866-5</id>
        <name>K</name>
        <name>KLC1K</name>
        <sequence type="described" ref="VSP_008019"/>
    </isoform>
    <isoform>
        <id>Q07866-6</id>
        <name>N</name>
        <name>KLC1N</name>
        <sequence type="described" ref="VSP_008017 VSP_008019 VSP_008020"/>
    </isoform>
    <isoform>
        <id>Q07866-7</id>
        <name>P</name>
        <name>KLC1P</name>
        <sequence type="described" ref="VSP_008021"/>
    </isoform>
    <isoform>
        <id>Q07866-8</id>
        <name>S</name>
        <name>KLC1S</name>
        <name>Q</name>
        <name>KLC1Q</name>
        <sequence type="described" ref="VSP_008017 VSP_008018"/>
    </isoform>
    <isoform>
        <id>Q07866-9</id>
        <name>I</name>
        <sequence type="described" ref="VSP_023323"/>
    </isoform>
    <isoform>
        <id>Q07866-10</id>
        <name>D</name>
        <name>KLC1D</name>
        <sequence type="described" ref="VSP_046424"/>
    </isoform>
    <text>Additional isoforms seem to exist. Has the potential to produce 285'919 splice forms.</text>
</comment>
<comment type="tissue specificity">
    <text evidence="4">Found in a variety of tissues. Mostly abundant in brain and spine.</text>
</comment>
<comment type="PTM">
    <text evidence="6">Phosphorylation at Ser-460 by ERK inhibits interaction with CLSTN1 and localization to cytoplasmic vesicles.</text>
</comment>
<comment type="similarity">
    <text evidence="11">Belongs to the kinesin light chain family.</text>
</comment>
<comment type="caution">
    <text evidence="11">It is uncertain whether Met-1 or Met-5 is the initiator.</text>
</comment>
<comment type="sequence caution" evidence="11">
    <conflict type="erroneous initiation">
        <sequence resource="EMBL-CDS" id="AAA16576"/>
    </conflict>
    <text>Truncated N-terminus.</text>
</comment>
<comment type="sequence caution" evidence="11">
    <conflict type="erroneous initiation">
        <sequence resource="EMBL-CDS" id="AAF72543"/>
    </conflict>
    <text>Truncated N-terminus.</text>
</comment>
<comment type="sequence caution" evidence="11">
    <conflict type="erroneous initiation">
        <sequence resource="EMBL-CDS" id="AAO62549"/>
    </conflict>
    <text>Truncated N-terminus.</text>
</comment>
<comment type="sequence caution" evidence="11">
    <conflict type="erroneous initiation">
        <sequence resource="EMBL-CDS" id="DAA01265"/>
    </conflict>
    <text>Extended N-terminus.</text>
</comment>
<comment type="sequence caution" evidence="11">
    <conflict type="erroneous initiation">
        <sequence resource="EMBL-CDS" id="DAA01266"/>
    </conflict>
    <text>Extended N-terminus.</text>
</comment>
<comment type="sequence caution" evidence="11">
    <conflict type="erroneous initiation">
        <sequence resource="EMBL-CDS" id="DAA01268"/>
    </conflict>
    <text>Extended N-terminus.</text>
</comment>
<comment type="sequence caution" evidence="11">
    <conflict type="erroneous initiation">
        <sequence resource="EMBL-CDS" id="DAA01289"/>
    </conflict>
    <text>Extended N-terminus.</text>
</comment>
<comment type="sequence caution" evidence="11">
    <conflict type="erroneous initiation">
        <sequence resource="EMBL-CDS" id="DAA01291"/>
    </conflict>
    <text>Extended N-terminus.</text>
</comment>
<comment type="sequence caution" evidence="11">
    <conflict type="erroneous initiation">
        <sequence resource="EMBL-CDS" id="DAA01292"/>
    </conflict>
    <text>Extended N-terminus.</text>
</comment>
<comment type="sequence caution" evidence="11">
    <conflict type="erroneous initiation">
        <sequence resource="EMBL-CDS" id="DAA01295"/>
    </conflict>
    <text>Extended N-terminus.</text>
</comment>
<comment type="sequence caution" evidence="11">
    <conflict type="erroneous initiation">
        <sequence resource="EMBL-CDS" id="DAA01296"/>
    </conflict>
    <text>Extended N-terminus.</text>
</comment>
<comment type="sequence caution" evidence="11">
    <conflict type="erroneous initiation">
        <sequence resource="EMBL-CDS" id="DAA01297"/>
    </conflict>
    <text>Extended N-terminus.</text>
</comment>
<protein>
    <recommendedName>
        <fullName>Kinesin light chain 1</fullName>
        <shortName>KLC 1</shortName>
    </recommendedName>
</protein>
<accession>Q07866</accession>
<accession>A6NF62</accession>
<accession>F8VTM4</accession>
<accession>Q7RTM2</accession>
<accession>Q7RTM3</accession>
<accession>Q7RTM5</accession>
<accession>Q7RTP9</accession>
<accession>Q7RTQ3</accession>
<accession>Q7RTQ5</accession>
<accession>Q7RTQ6</accession>
<accession>Q86SF5</accession>
<accession>Q86TF5</accession>
<accession>Q86V74</accession>
<accession>Q86V75</accession>
<accession>Q86V76</accession>
<accession>Q86V77</accession>
<accession>Q86V78</accession>
<accession>Q86V79</accession>
<accession>Q96H62</accession>
<dbReference type="EMBL" id="L04733">
    <property type="protein sequence ID" value="AAA16576.1"/>
    <property type="status" value="ALT_INIT"/>
    <property type="molecule type" value="mRNA"/>
</dbReference>
<dbReference type="EMBL" id="AY180163">
    <property type="protein sequence ID" value="AAO62548.1"/>
    <property type="molecule type" value="mRNA"/>
</dbReference>
<dbReference type="EMBL" id="AY180164">
    <property type="protein sequence ID" value="AAO62549.1"/>
    <property type="status" value="ALT_INIT"/>
    <property type="molecule type" value="mRNA"/>
</dbReference>
<dbReference type="EMBL" id="AY180165">
    <property type="protein sequence ID" value="AAO62550.1"/>
    <property type="molecule type" value="mRNA"/>
</dbReference>
<dbReference type="EMBL" id="AY180166">
    <property type="protein sequence ID" value="AAO62551.1"/>
    <property type="molecule type" value="mRNA"/>
</dbReference>
<dbReference type="EMBL" id="AY180168">
    <property type="protein sequence ID" value="AAO62553.1"/>
    <property type="molecule type" value="mRNA"/>
</dbReference>
<dbReference type="EMBL" id="AY180167">
    <property type="protein sequence ID" value="AAO62552.1"/>
    <property type="molecule type" value="mRNA"/>
</dbReference>
<dbReference type="EMBL" id="AY180169">
    <property type="protein sequence ID" value="AAO62554.1"/>
    <property type="molecule type" value="mRNA"/>
</dbReference>
<dbReference type="EMBL" id="AY180170">
    <property type="protein sequence ID" value="AAO62555.1"/>
    <property type="molecule type" value="mRNA"/>
</dbReference>
<dbReference type="EMBL" id="AY244715">
    <property type="protein sequence ID" value="AAO64641.1"/>
    <property type="molecule type" value="mRNA"/>
</dbReference>
<dbReference type="EMBL" id="AF267530">
    <property type="protein sequence ID" value="AAF72543.1"/>
    <property type="status" value="ALT_INIT"/>
    <property type="molecule type" value="Genomic_DNA"/>
</dbReference>
<dbReference type="EMBL" id="AF267518">
    <property type="protein sequence ID" value="AAF72543.1"/>
    <property type="status" value="JOINED"/>
    <property type="molecule type" value="Genomic_DNA"/>
</dbReference>
<dbReference type="EMBL" id="AF267519">
    <property type="protein sequence ID" value="AAF72543.1"/>
    <property type="status" value="JOINED"/>
    <property type="molecule type" value="Genomic_DNA"/>
</dbReference>
<dbReference type="EMBL" id="AF267520">
    <property type="protein sequence ID" value="AAF72543.1"/>
    <property type="status" value="JOINED"/>
    <property type="molecule type" value="Genomic_DNA"/>
</dbReference>
<dbReference type="EMBL" id="AF267521">
    <property type="protein sequence ID" value="AAF72543.1"/>
    <property type="status" value="JOINED"/>
    <property type="molecule type" value="Genomic_DNA"/>
</dbReference>
<dbReference type="EMBL" id="AF267522">
    <property type="protein sequence ID" value="AAF72543.1"/>
    <property type="status" value="JOINED"/>
    <property type="molecule type" value="Genomic_DNA"/>
</dbReference>
<dbReference type="EMBL" id="AF267523">
    <property type="protein sequence ID" value="AAF72543.1"/>
    <property type="status" value="JOINED"/>
    <property type="molecule type" value="Genomic_DNA"/>
</dbReference>
<dbReference type="EMBL" id="AF267524">
    <property type="protein sequence ID" value="AAF72543.1"/>
    <property type="status" value="JOINED"/>
    <property type="molecule type" value="Genomic_DNA"/>
</dbReference>
<dbReference type="EMBL" id="AF267525">
    <property type="protein sequence ID" value="AAF72543.1"/>
    <property type="status" value="JOINED"/>
    <property type="molecule type" value="Genomic_DNA"/>
</dbReference>
<dbReference type="EMBL" id="AF267526">
    <property type="protein sequence ID" value="AAF72543.1"/>
    <property type="status" value="JOINED"/>
    <property type="molecule type" value="Genomic_DNA"/>
</dbReference>
<dbReference type="EMBL" id="AF267527">
    <property type="protein sequence ID" value="AAF72543.1"/>
    <property type="status" value="JOINED"/>
    <property type="molecule type" value="Genomic_DNA"/>
</dbReference>
<dbReference type="EMBL" id="AF267528">
    <property type="protein sequence ID" value="AAF72543.1"/>
    <property type="status" value="JOINED"/>
    <property type="molecule type" value="Genomic_DNA"/>
</dbReference>
<dbReference type="EMBL" id="AF267529">
    <property type="protein sequence ID" value="AAF72543.1"/>
    <property type="status" value="JOINED"/>
    <property type="molecule type" value="Genomic_DNA"/>
</dbReference>
<dbReference type="EMBL" id="AL049840">
    <property type="status" value="NOT_ANNOTATED_CDS"/>
    <property type="molecule type" value="Genomic_DNA"/>
</dbReference>
<dbReference type="EMBL" id="AL139300">
    <property type="status" value="NOT_ANNOTATED_CDS"/>
    <property type="molecule type" value="Genomic_DNA"/>
</dbReference>
<dbReference type="EMBL" id="CH471061">
    <property type="protein sequence ID" value="EAW81834.1"/>
    <property type="molecule type" value="Genomic_DNA"/>
</dbReference>
<dbReference type="EMBL" id="BC008881">
    <property type="protein sequence ID" value="AAH08881.1"/>
    <property type="molecule type" value="mRNA"/>
</dbReference>
<dbReference type="EMBL" id="BK000681">
    <property type="protein sequence ID" value="DAA01265.1"/>
    <property type="status" value="ALT_INIT"/>
    <property type="molecule type" value="mRNA"/>
</dbReference>
<dbReference type="EMBL" id="BK000682">
    <property type="protein sequence ID" value="DAA01266.1"/>
    <property type="status" value="ALT_INIT"/>
    <property type="molecule type" value="mRNA"/>
</dbReference>
<dbReference type="EMBL" id="BK000684">
    <property type="protein sequence ID" value="DAA01268.1"/>
    <property type="status" value="ALT_INIT"/>
    <property type="molecule type" value="mRNA"/>
</dbReference>
<dbReference type="EMBL" id="BK001163">
    <property type="protein sequence ID" value="DAA01289.1"/>
    <property type="status" value="ALT_INIT"/>
    <property type="molecule type" value="mRNA"/>
</dbReference>
<dbReference type="EMBL" id="BK001165">
    <property type="protein sequence ID" value="DAA01291.1"/>
    <property type="status" value="ALT_INIT"/>
    <property type="molecule type" value="mRNA"/>
</dbReference>
<dbReference type="EMBL" id="BK001166">
    <property type="protein sequence ID" value="DAA01292.1"/>
    <property type="status" value="ALT_INIT"/>
    <property type="molecule type" value="mRNA"/>
</dbReference>
<dbReference type="EMBL" id="BK001169">
    <property type="protein sequence ID" value="DAA01295.1"/>
    <property type="status" value="ALT_INIT"/>
    <property type="molecule type" value="mRNA"/>
</dbReference>
<dbReference type="EMBL" id="BK001170">
    <property type="protein sequence ID" value="DAA01296.1"/>
    <property type="status" value="ALT_INIT"/>
    <property type="molecule type" value="mRNA"/>
</dbReference>
<dbReference type="EMBL" id="BK001171">
    <property type="protein sequence ID" value="DAA01297.1"/>
    <property type="status" value="ALT_INIT"/>
    <property type="molecule type" value="mRNA"/>
</dbReference>
<dbReference type="CCDS" id="CCDS32165.1">
    <molecule id="Q07866-2"/>
</dbReference>
<dbReference type="CCDS" id="CCDS41996.1">
    <molecule id="Q07866-1"/>
</dbReference>
<dbReference type="CCDS" id="CCDS45168.1">
    <molecule id="Q07866-10"/>
</dbReference>
<dbReference type="CCDS" id="CCDS91947.1">
    <molecule id="Q07866-6"/>
</dbReference>
<dbReference type="CCDS" id="CCDS91950.1">
    <molecule id="Q07866-3"/>
</dbReference>
<dbReference type="CCDS" id="CCDS91952.1">
    <molecule id="Q07866-4"/>
</dbReference>
<dbReference type="CCDS" id="CCDS91953.1">
    <molecule id="Q07866-9"/>
</dbReference>
<dbReference type="PIR" id="I53013">
    <property type="entry name" value="I53013"/>
</dbReference>
<dbReference type="RefSeq" id="NP_001123579.1">
    <molecule id="Q07866-10"/>
    <property type="nucleotide sequence ID" value="NM_001130107.2"/>
</dbReference>
<dbReference type="RefSeq" id="NP_001381766.1">
    <molecule id="Q07866-9"/>
    <property type="nucleotide sequence ID" value="NM_001394837.1"/>
</dbReference>
<dbReference type="RefSeq" id="NP_001381767.1">
    <molecule id="Q07866-4"/>
    <property type="nucleotide sequence ID" value="NM_001394838.1"/>
</dbReference>
<dbReference type="RefSeq" id="NP_001381770.1">
    <molecule id="Q07866-6"/>
    <property type="nucleotide sequence ID" value="NM_001394841.1"/>
</dbReference>
<dbReference type="RefSeq" id="NP_001381781.1">
    <molecule id="Q07866-3"/>
    <property type="nucleotide sequence ID" value="NM_001394852.1"/>
</dbReference>
<dbReference type="RefSeq" id="NP_001381784.1">
    <molecule id="Q07866-8"/>
    <property type="nucleotide sequence ID" value="NM_001394855.1"/>
</dbReference>
<dbReference type="RefSeq" id="NP_005543.2">
    <molecule id="Q07866-2"/>
    <property type="nucleotide sequence ID" value="NM_005552.4"/>
</dbReference>
<dbReference type="RefSeq" id="NP_891553.2">
    <molecule id="Q07866-1"/>
    <property type="nucleotide sequence ID" value="NM_182923.4"/>
</dbReference>
<dbReference type="PDB" id="3NF1">
    <property type="method" value="X-ray"/>
    <property type="resolution" value="2.80 A"/>
    <property type="chains" value="A=203-497"/>
</dbReference>
<dbReference type="PDB" id="5OJ8">
    <property type="method" value="X-ray"/>
    <property type="resolution" value="2.25 A"/>
    <property type="chains" value="A=185-418"/>
</dbReference>
<dbReference type="PDB" id="7AI4">
    <property type="method" value="X-ray"/>
    <property type="resolution" value="2.79 A"/>
    <property type="chains" value="A/B=206-418, A/B=459-502"/>
</dbReference>
<dbReference type="PDB" id="7AIE">
    <property type="method" value="X-ray"/>
    <property type="resolution" value="3.29 A"/>
    <property type="chains" value="A/B/C/D=185-418"/>
</dbReference>
<dbReference type="PDBsum" id="3NF1"/>
<dbReference type="PDBsum" id="5OJ8"/>
<dbReference type="PDBsum" id="7AI4"/>
<dbReference type="PDBsum" id="7AIE"/>
<dbReference type="SMR" id="Q07866"/>
<dbReference type="BioGRID" id="110029">
    <property type="interactions" value="254"/>
</dbReference>
<dbReference type="CORUM" id="Q07866"/>
<dbReference type="DIP" id="DIP-40371N"/>
<dbReference type="ELM" id="Q07866"/>
<dbReference type="FunCoup" id="Q07866">
    <property type="interactions" value="1300"/>
</dbReference>
<dbReference type="IntAct" id="Q07866">
    <property type="interactions" value="88"/>
</dbReference>
<dbReference type="MINT" id="Q07866"/>
<dbReference type="STRING" id="9606.ENSP00000414982"/>
<dbReference type="iPTMnet" id="Q07866"/>
<dbReference type="MetOSite" id="Q07866"/>
<dbReference type="PhosphoSitePlus" id="Q07866"/>
<dbReference type="SwissPalm" id="Q07866"/>
<dbReference type="BioMuta" id="KLC1"/>
<dbReference type="DMDM" id="223590110"/>
<dbReference type="jPOST" id="Q07866"/>
<dbReference type="MassIVE" id="Q07866"/>
<dbReference type="PaxDb" id="9606-ENSP00000414982"/>
<dbReference type="PeptideAtlas" id="Q07866"/>
<dbReference type="ProteomicsDB" id="28642"/>
<dbReference type="ProteomicsDB" id="58544">
    <molecule id="Q07866-1"/>
</dbReference>
<dbReference type="ProteomicsDB" id="58545">
    <molecule id="Q07866-2"/>
</dbReference>
<dbReference type="ProteomicsDB" id="58546">
    <molecule id="Q07866-3"/>
</dbReference>
<dbReference type="ProteomicsDB" id="58547">
    <molecule id="Q07866-4"/>
</dbReference>
<dbReference type="ProteomicsDB" id="58548">
    <molecule id="Q07866-5"/>
</dbReference>
<dbReference type="ProteomicsDB" id="58549">
    <molecule id="Q07866-6"/>
</dbReference>
<dbReference type="ProteomicsDB" id="58550">
    <molecule id="Q07866-7"/>
</dbReference>
<dbReference type="ProteomicsDB" id="58551">
    <molecule id="Q07866-8"/>
</dbReference>
<dbReference type="ProteomicsDB" id="58552">
    <molecule id="Q07866-9"/>
</dbReference>
<dbReference type="Pumba" id="Q07866"/>
<dbReference type="Antibodypedia" id="4068">
    <property type="antibodies" value="291 antibodies from 37 providers"/>
</dbReference>
<dbReference type="DNASU" id="3831"/>
<dbReference type="Ensembl" id="ENST00000246489.11">
    <molecule id="Q07866-4"/>
    <property type="protein sequence ID" value="ENSP00000246489.7"/>
    <property type="gene ID" value="ENSG00000126214.22"/>
</dbReference>
<dbReference type="Ensembl" id="ENST00000334553.11">
    <molecule id="Q07866-9"/>
    <property type="protein sequence ID" value="ENSP00000334523.6"/>
    <property type="gene ID" value="ENSG00000126214.22"/>
</dbReference>
<dbReference type="Ensembl" id="ENST00000347839.10">
    <molecule id="Q07866-6"/>
    <property type="protein sequence ID" value="ENSP00000334618.7"/>
    <property type="gene ID" value="ENSG00000126214.22"/>
</dbReference>
<dbReference type="Ensembl" id="ENST00000348520.10">
    <molecule id="Q07866-1"/>
    <property type="protein sequence ID" value="ENSP00000341154.6"/>
    <property type="gene ID" value="ENSG00000126214.22"/>
</dbReference>
<dbReference type="Ensembl" id="ENST00000389744.8">
    <molecule id="Q07866-2"/>
    <property type="protein sequence ID" value="ENSP00000374394.3"/>
    <property type="gene ID" value="ENSG00000126214.22"/>
</dbReference>
<dbReference type="Ensembl" id="ENST00000452929.6">
    <molecule id="Q07866-10"/>
    <property type="protein sequence ID" value="ENSP00000414982.2"/>
    <property type="gene ID" value="ENSG00000126214.22"/>
</dbReference>
<dbReference type="Ensembl" id="ENST00000553286.5">
    <molecule id="Q07866-2"/>
    <property type="protein sequence ID" value="ENSP00000452487.1"/>
    <property type="gene ID" value="ENSG00000126214.22"/>
</dbReference>
<dbReference type="Ensembl" id="ENST00000554228.5">
    <molecule id="Q07866-2"/>
    <property type="protein sequence ID" value="ENSP00000450616.1"/>
    <property type="gene ID" value="ENSG00000126214.22"/>
</dbReference>
<dbReference type="Ensembl" id="ENST00000557450.5">
    <molecule id="Q07866-3"/>
    <property type="protein sequence ID" value="ENSP00000450648.1"/>
    <property type="gene ID" value="ENSG00000126214.22"/>
</dbReference>
<dbReference type="Ensembl" id="ENST00000634686.1">
    <molecule id="Q07866-7"/>
    <property type="protein sequence ID" value="ENSP00000488938.1"/>
    <property type="gene ID" value="ENSG00000126214.22"/>
</dbReference>
<dbReference type="GeneID" id="3831"/>
<dbReference type="KEGG" id="hsa:3831"/>
<dbReference type="MANE-Select" id="ENST00000334553.11">
    <molecule id="Q07866-9"/>
    <property type="protein sequence ID" value="ENSP00000334523.6"/>
    <property type="RefSeq nucleotide sequence ID" value="NM_001394837.1"/>
    <property type="RefSeq protein sequence ID" value="NP_001381766.1"/>
</dbReference>
<dbReference type="UCSC" id="uc001ynm.2">
    <molecule id="Q07866-1"/>
    <property type="organism name" value="human"/>
</dbReference>
<dbReference type="AGR" id="HGNC:6387"/>
<dbReference type="CTD" id="3831"/>
<dbReference type="DisGeNET" id="3831"/>
<dbReference type="GeneCards" id="KLC1"/>
<dbReference type="HGNC" id="HGNC:6387">
    <property type="gene designation" value="KLC1"/>
</dbReference>
<dbReference type="HPA" id="ENSG00000126214">
    <property type="expression patterns" value="Tissue enhanced (brain)"/>
</dbReference>
<dbReference type="MalaCards" id="KLC1"/>
<dbReference type="MIM" id="600025">
    <property type="type" value="gene"/>
</dbReference>
<dbReference type="neXtProt" id="NX_Q07866"/>
<dbReference type="OpenTargets" id="ENSG00000126214"/>
<dbReference type="PharmGKB" id="PA162393424"/>
<dbReference type="VEuPathDB" id="HostDB:ENSG00000126214"/>
<dbReference type="eggNOG" id="KOG1840">
    <property type="taxonomic scope" value="Eukaryota"/>
</dbReference>
<dbReference type="GeneTree" id="ENSGT00940000155555"/>
<dbReference type="InParanoid" id="Q07866"/>
<dbReference type="OrthoDB" id="413723at2759"/>
<dbReference type="PAN-GO" id="Q07866">
    <property type="GO annotations" value="3 GO annotations based on evolutionary models"/>
</dbReference>
<dbReference type="PhylomeDB" id="Q07866"/>
<dbReference type="TreeFam" id="TF314010"/>
<dbReference type="PathwayCommons" id="Q07866"/>
<dbReference type="Reactome" id="R-HSA-2132295">
    <property type="pathway name" value="MHC class II antigen presentation"/>
</dbReference>
<dbReference type="Reactome" id="R-HSA-5625970">
    <property type="pathway name" value="RHO GTPases activate KTN1"/>
</dbReference>
<dbReference type="Reactome" id="R-HSA-6811434">
    <property type="pathway name" value="COPI-dependent Golgi-to-ER retrograde traffic"/>
</dbReference>
<dbReference type="Reactome" id="R-HSA-9725370">
    <property type="pathway name" value="Signaling by ALK fusions and activated point mutants"/>
</dbReference>
<dbReference type="Reactome" id="R-HSA-983189">
    <property type="pathway name" value="Kinesins"/>
</dbReference>
<dbReference type="SignaLink" id="Q07866"/>
<dbReference type="SIGNOR" id="Q07866"/>
<dbReference type="BioGRID-ORCS" id="3831">
    <property type="hits" value="6 hits in 1152 CRISPR screens"/>
</dbReference>
<dbReference type="CD-CODE" id="DEE660B4">
    <property type="entry name" value="Stress granule"/>
</dbReference>
<dbReference type="CD-CODE" id="FB4E32DD">
    <property type="entry name" value="Presynaptic clusters and postsynaptic densities"/>
</dbReference>
<dbReference type="ChiTaRS" id="KLC1">
    <property type="organism name" value="human"/>
</dbReference>
<dbReference type="EvolutionaryTrace" id="Q07866"/>
<dbReference type="GeneWiki" id="KLC1"/>
<dbReference type="GenomeRNAi" id="3831"/>
<dbReference type="Pharos" id="Q07866">
    <property type="development level" value="Tbio"/>
</dbReference>
<dbReference type="PRO" id="PR:Q07866"/>
<dbReference type="Proteomes" id="UP000005640">
    <property type="component" value="Chromosome 14"/>
</dbReference>
<dbReference type="RNAct" id="Q07866">
    <property type="molecule type" value="protein"/>
</dbReference>
<dbReference type="Bgee" id="ENSG00000126214">
    <property type="expression patterns" value="Expressed in right hemisphere of cerebellum and 208 other cell types or tissues"/>
</dbReference>
<dbReference type="ExpressionAtlas" id="Q07866">
    <property type="expression patterns" value="baseline and differential"/>
</dbReference>
<dbReference type="GO" id="GO:0005737">
    <property type="term" value="C:cytoplasm"/>
    <property type="evidence" value="ECO:0000318"/>
    <property type="project" value="GO_Central"/>
</dbReference>
<dbReference type="GO" id="GO:0031410">
    <property type="term" value="C:cytoplasmic vesicle"/>
    <property type="evidence" value="ECO:0007669"/>
    <property type="project" value="UniProtKB-KW"/>
</dbReference>
<dbReference type="GO" id="GO:0005829">
    <property type="term" value="C:cytosol"/>
    <property type="evidence" value="ECO:0000250"/>
    <property type="project" value="HGNC-UCL"/>
</dbReference>
<dbReference type="GO" id="GO:0030426">
    <property type="term" value="C:growth cone"/>
    <property type="evidence" value="ECO:0000250"/>
    <property type="project" value="UniProtKB"/>
</dbReference>
<dbReference type="GO" id="GO:0005871">
    <property type="term" value="C:kinesin complex"/>
    <property type="evidence" value="ECO:0000250"/>
    <property type="project" value="HGNC-UCL"/>
</dbReference>
<dbReference type="GO" id="GO:0016020">
    <property type="term" value="C:membrane"/>
    <property type="evidence" value="ECO:0007005"/>
    <property type="project" value="UniProtKB"/>
</dbReference>
<dbReference type="GO" id="GO:0005874">
    <property type="term" value="C:microtubule"/>
    <property type="evidence" value="ECO:0007669"/>
    <property type="project" value="UniProtKB-KW"/>
</dbReference>
<dbReference type="GO" id="GO:0003774">
    <property type="term" value="F:cytoskeletal motor activity"/>
    <property type="evidence" value="ECO:0000304"/>
    <property type="project" value="ProtInc"/>
</dbReference>
<dbReference type="GO" id="GO:0019894">
    <property type="term" value="F:kinesin binding"/>
    <property type="evidence" value="ECO:0000318"/>
    <property type="project" value="GO_Central"/>
</dbReference>
<dbReference type="GO" id="GO:0007155">
    <property type="term" value="P:cell adhesion"/>
    <property type="evidence" value="ECO:0007669"/>
    <property type="project" value="UniProtKB-KW"/>
</dbReference>
<dbReference type="GO" id="GO:0007018">
    <property type="term" value="P:microtubule-based movement"/>
    <property type="evidence" value="ECO:0000318"/>
    <property type="project" value="GO_Central"/>
</dbReference>
<dbReference type="GO" id="GO:0035617">
    <property type="term" value="P:stress granule disassembly"/>
    <property type="evidence" value="ECO:0000250"/>
    <property type="project" value="BHF-UCL"/>
</dbReference>
<dbReference type="DisProt" id="DP02532"/>
<dbReference type="FunFam" id="1.25.40.10:FF:000003">
    <property type="entry name" value="kinesin light chain isoform X1"/>
    <property type="match status" value="1"/>
</dbReference>
<dbReference type="Gene3D" id="1.25.40.10">
    <property type="entry name" value="Tetratricopeptide repeat domain"/>
    <property type="match status" value="1"/>
</dbReference>
<dbReference type="InterPro" id="IPR002151">
    <property type="entry name" value="Kinesin_light"/>
</dbReference>
<dbReference type="InterPro" id="IPR015792">
    <property type="entry name" value="Kinesin_light_repeat"/>
</dbReference>
<dbReference type="InterPro" id="IPR011990">
    <property type="entry name" value="TPR-like_helical_dom_sf"/>
</dbReference>
<dbReference type="InterPro" id="IPR019734">
    <property type="entry name" value="TPR_rpt"/>
</dbReference>
<dbReference type="PANTHER" id="PTHR45783">
    <property type="entry name" value="KINESIN LIGHT CHAIN"/>
    <property type="match status" value="1"/>
</dbReference>
<dbReference type="PANTHER" id="PTHR45783:SF7">
    <property type="entry name" value="KINESIN LIGHT CHAIN 1"/>
    <property type="match status" value="1"/>
</dbReference>
<dbReference type="Pfam" id="PF13374">
    <property type="entry name" value="TPR_10"/>
    <property type="match status" value="2"/>
</dbReference>
<dbReference type="Pfam" id="PF13424">
    <property type="entry name" value="TPR_12"/>
    <property type="match status" value="2"/>
</dbReference>
<dbReference type="PRINTS" id="PR00381">
    <property type="entry name" value="KINESINLIGHT"/>
</dbReference>
<dbReference type="SMART" id="SM00028">
    <property type="entry name" value="TPR"/>
    <property type="match status" value="5"/>
</dbReference>
<dbReference type="SUPFAM" id="SSF48452">
    <property type="entry name" value="TPR-like"/>
    <property type="match status" value="2"/>
</dbReference>
<dbReference type="PROSITE" id="PS01160">
    <property type="entry name" value="KINESIN_LIGHT"/>
    <property type="match status" value="4"/>
</dbReference>
<dbReference type="PROSITE" id="PS50005">
    <property type="entry name" value="TPR"/>
    <property type="match status" value="6"/>
</dbReference>
<dbReference type="PROSITE" id="PS50293">
    <property type="entry name" value="TPR_REGION"/>
    <property type="match status" value="2"/>
</dbReference>
<gene>
    <name type="primary">KLC1</name>
    <name type="synonym">KLC</name>
    <name type="synonym">KNS2</name>
</gene>
<sequence>MYDNMSTMVYIKEDKLEKLTQDEIISKTKQVIQGLEALKNEHNSILQSLLETLKCLKKDDESNLVEEKSNMIRKSLEMLELGLSEAQVMMALSNHLNAVESEKQKLRAQVRRLCQENQWLRDELANTQQKLQKSEQSVAQLEEEKKHLEFMNQLKKYDDDISPSEDKDTDSTKEPLDDLFPNDEDDPGQGIQQQHSSAAAAAQQGGYEIPARLRTLHNLVIQYASQGRYEVAVPLCKQALEDLEKTSGHDHPDVATMLNILALVYRDQNKYKDAANLLNDALAIREKTLGKDHPAVAATLNNLAVLYGKRGKYKEAEPLCKRALEIREKVLGKDHPDVAKQLNNLALLCQNQGKYEEVEYYYQRALEIYQTKLGPDDPNVAKTKNNLASCYLKQGKFKQAETLYKEILTRAHEREFGSVDDENKPIWMHAEEREECKGKQKDGTSFGEYGGWYKACKVDSPTVTTTLKNLGALYRRQGKFEAAETLEEAAMRSRKQGLDNVHKQRVAEVLNDPENMEKRRSRESLNVDVVKYESGPDGGEEVSMSVEWNGGVSGRASFCGKRQQQQWPGRRHR</sequence>
<reference key="1">
    <citation type="journal article" date="1993" name="DNA Cell Biol.">
        <title>Cloning and genetic characterization of the human kinesin light-chain (KLC) gene.</title>
        <authorList>
            <person name="Cabeza-Arvelaiz Y."/>
            <person name="Shih L.-C.N."/>
            <person name="Hardman N."/>
            <person name="Asselbergs F."/>
            <person name="Bilbe G."/>
            <person name="Schmitz A."/>
            <person name="White B."/>
            <person name="Siciliano M.J."/>
            <person name="Lachman L.B."/>
        </authorList>
    </citation>
    <scope>NUCLEOTIDE SEQUENCE [MRNA] (ISOFORM A)</scope>
</reference>
<reference key="2">
    <citation type="journal article" date="2003" name="Traffic">
        <title>Alternatively spliced products of the human kinesin light chain 1 (KNS2) gene.</title>
        <authorList>
            <person name="McCart A.E."/>
            <person name="Mahony D."/>
            <person name="Rothnagel J.A."/>
        </authorList>
    </citation>
    <scope>NUCLEOTIDE SEQUENCE [MRNA] (ISOFORMS A; C; D; G; I; P AND S)</scope>
    <scope>NUCLEOTIDE SEQUENCE [MRNA] OF 444-573 (ISOFORMS J; K AND N)</scope>
    <source>
        <tissue>Brain</tissue>
        <tissue>Foreskin</tissue>
        <tissue>Liver</tissue>
    </source>
</reference>
<reference key="3">
    <citation type="submission" date="2000-05" db="EMBL/GenBank/DDBJ databases">
        <authorList>
            <person name="Gerber S."/>
            <person name="Rozet J.-M."/>
            <person name="Perrault I."/>
            <person name="Ducroq D."/>
            <person name="Souied E."/>
            <person name="Munnich A."/>
            <person name="Kaplan J."/>
        </authorList>
    </citation>
    <scope>NUCLEOTIDE SEQUENCE [GENOMIC DNA]</scope>
</reference>
<reference key="4">
    <citation type="journal article" date="2003" name="Nature">
        <title>The DNA sequence and analysis of human chromosome 14.</title>
        <authorList>
            <person name="Heilig R."/>
            <person name="Eckenberg R."/>
            <person name="Petit J.-L."/>
            <person name="Fonknechten N."/>
            <person name="Da Silva C."/>
            <person name="Cattolico L."/>
            <person name="Levy M."/>
            <person name="Barbe V."/>
            <person name="De Berardinis V."/>
            <person name="Ureta-Vidal A."/>
            <person name="Pelletier E."/>
            <person name="Vico V."/>
            <person name="Anthouard V."/>
            <person name="Rowen L."/>
            <person name="Madan A."/>
            <person name="Qin S."/>
            <person name="Sun H."/>
            <person name="Du H."/>
            <person name="Pepin K."/>
            <person name="Artiguenave F."/>
            <person name="Robert C."/>
            <person name="Cruaud C."/>
            <person name="Bruels T."/>
            <person name="Jaillon O."/>
            <person name="Friedlander L."/>
            <person name="Samson G."/>
            <person name="Brottier P."/>
            <person name="Cure S."/>
            <person name="Segurens B."/>
            <person name="Aniere F."/>
            <person name="Samain S."/>
            <person name="Crespeau H."/>
            <person name="Abbasi N."/>
            <person name="Aiach N."/>
            <person name="Boscus D."/>
            <person name="Dickhoff R."/>
            <person name="Dors M."/>
            <person name="Dubois I."/>
            <person name="Friedman C."/>
            <person name="Gouyvenoux M."/>
            <person name="James R."/>
            <person name="Madan A."/>
            <person name="Mairey-Estrada B."/>
            <person name="Mangenot S."/>
            <person name="Martins N."/>
            <person name="Menard M."/>
            <person name="Oztas S."/>
            <person name="Ratcliffe A."/>
            <person name="Shaffer T."/>
            <person name="Trask B."/>
            <person name="Vacherie B."/>
            <person name="Bellemere C."/>
            <person name="Belser C."/>
            <person name="Besnard-Gonnet M."/>
            <person name="Bartol-Mavel D."/>
            <person name="Boutard M."/>
            <person name="Briez-Silla S."/>
            <person name="Combette S."/>
            <person name="Dufosse-Laurent V."/>
            <person name="Ferron C."/>
            <person name="Lechaplais C."/>
            <person name="Louesse C."/>
            <person name="Muselet D."/>
            <person name="Magdelenat G."/>
            <person name="Pateau E."/>
            <person name="Petit E."/>
            <person name="Sirvain-Trukniewicz P."/>
            <person name="Trybou A."/>
            <person name="Vega-Czarny N."/>
            <person name="Bataille E."/>
            <person name="Bluet E."/>
            <person name="Bordelais I."/>
            <person name="Dubois M."/>
            <person name="Dumont C."/>
            <person name="Guerin T."/>
            <person name="Haffray S."/>
            <person name="Hammadi R."/>
            <person name="Muanga J."/>
            <person name="Pellouin V."/>
            <person name="Robert D."/>
            <person name="Wunderle E."/>
            <person name="Gauguet G."/>
            <person name="Roy A."/>
            <person name="Sainte-Marthe L."/>
            <person name="Verdier J."/>
            <person name="Verdier-Discala C."/>
            <person name="Hillier L.W."/>
            <person name="Fulton L."/>
            <person name="McPherson J."/>
            <person name="Matsuda F."/>
            <person name="Wilson R."/>
            <person name="Scarpelli C."/>
            <person name="Gyapay G."/>
            <person name="Wincker P."/>
            <person name="Saurin W."/>
            <person name="Quetier F."/>
            <person name="Waterston R."/>
            <person name="Hood L."/>
            <person name="Weissenbach J."/>
        </authorList>
    </citation>
    <scope>NUCLEOTIDE SEQUENCE [LARGE SCALE GENOMIC DNA]</scope>
</reference>
<reference key="5">
    <citation type="submission" date="2005-07" db="EMBL/GenBank/DDBJ databases">
        <authorList>
            <person name="Mural R.J."/>
            <person name="Istrail S."/>
            <person name="Sutton G.G."/>
            <person name="Florea L."/>
            <person name="Halpern A.L."/>
            <person name="Mobarry C.M."/>
            <person name="Lippert R."/>
            <person name="Walenz B."/>
            <person name="Shatkay H."/>
            <person name="Dew I."/>
            <person name="Miller J.R."/>
            <person name="Flanigan M.J."/>
            <person name="Edwards N.J."/>
            <person name="Bolanos R."/>
            <person name="Fasulo D."/>
            <person name="Halldorsson B.V."/>
            <person name="Hannenhalli S."/>
            <person name="Turner R."/>
            <person name="Yooseph S."/>
            <person name="Lu F."/>
            <person name="Nusskern D.R."/>
            <person name="Shue B.C."/>
            <person name="Zheng X.H."/>
            <person name="Zhong F."/>
            <person name="Delcher A.L."/>
            <person name="Huson D.H."/>
            <person name="Kravitz S.A."/>
            <person name="Mouchard L."/>
            <person name="Reinert K."/>
            <person name="Remington K.A."/>
            <person name="Clark A.G."/>
            <person name="Waterman M.S."/>
            <person name="Eichler E.E."/>
            <person name="Adams M.D."/>
            <person name="Hunkapiller M.W."/>
            <person name="Myers E.W."/>
            <person name="Venter J.C."/>
        </authorList>
    </citation>
    <scope>NUCLEOTIDE SEQUENCE [LARGE SCALE GENOMIC DNA]</scope>
</reference>
<reference key="6">
    <citation type="journal article" date="2004" name="Genome Res.">
        <title>The status, quality, and expansion of the NIH full-length cDNA project: the Mammalian Gene Collection (MGC).</title>
        <authorList>
            <consortium name="The MGC Project Team"/>
        </authorList>
    </citation>
    <scope>NUCLEOTIDE SEQUENCE [LARGE SCALE MRNA] (ISOFORM C)</scope>
    <source>
        <tissue>Uterus</tissue>
    </source>
</reference>
<reference key="7">
    <citation type="journal article" date="2004" name="J. Biol. Chem.">
        <title>The early onset dystonia protein torsinA interacts with kinesin light chain 1.</title>
        <authorList>
            <person name="Kamm C."/>
            <person name="Boston H."/>
            <person name="Hewett J."/>
            <person name="Wilbur J."/>
            <person name="Corey D.P."/>
            <person name="Hanson P.I."/>
            <person name="Ramesh V."/>
            <person name="Breakefield X.O."/>
        </authorList>
    </citation>
    <scope>SUBUNIT</scope>
    <scope>INTERACTION WITH TOR1A</scope>
    <scope>SUBCELLULAR LOCATION</scope>
    <scope>TISSUE SPECIFICITY</scope>
</reference>
<reference key="8">
    <citation type="journal article" date="2006" name="Cell">
        <title>Global, in vivo, and site-specific phosphorylation dynamics in signaling networks.</title>
        <authorList>
            <person name="Olsen J.V."/>
            <person name="Blagoev B."/>
            <person name="Gnad F."/>
            <person name="Macek B."/>
            <person name="Kumar C."/>
            <person name="Mortensen P."/>
            <person name="Mann M."/>
        </authorList>
    </citation>
    <scope>IDENTIFICATION BY MASS SPECTROMETRY [LARGE SCALE ANALYSIS]</scope>
    <source>
        <tissue>Cervix carcinoma</tissue>
    </source>
</reference>
<reference key="9">
    <citation type="journal article" date="2008" name="J. Proteome Res.">
        <title>Combining protein-based IMAC, peptide-based IMAC, and MudPIT for efficient phosphoproteomic analysis.</title>
        <authorList>
            <person name="Cantin G.T."/>
            <person name="Yi W."/>
            <person name="Lu B."/>
            <person name="Park S.K."/>
            <person name="Xu T."/>
            <person name="Lee J.-D."/>
            <person name="Yates J.R. III"/>
        </authorList>
    </citation>
    <scope>IDENTIFICATION BY MASS SPECTROMETRY [LARGE SCALE ANALYSIS]</scope>
    <source>
        <tissue>Cervix carcinoma</tissue>
    </source>
</reference>
<reference key="10">
    <citation type="journal article" date="2008" name="Mol. Cell">
        <title>Kinase-selective enrichment enables quantitative phosphoproteomics of the kinome across the cell cycle.</title>
        <authorList>
            <person name="Daub H."/>
            <person name="Olsen J.V."/>
            <person name="Bairlein M."/>
            <person name="Gnad F."/>
            <person name="Oppermann F.S."/>
            <person name="Korner R."/>
            <person name="Greff Z."/>
            <person name="Keri G."/>
            <person name="Stemmann O."/>
            <person name="Mann M."/>
        </authorList>
    </citation>
    <scope>IDENTIFICATION BY MASS SPECTROMETRY [LARGE SCALE ANALYSIS]</scope>
    <source>
        <tissue>Cervix carcinoma</tissue>
    </source>
</reference>
<reference key="11">
    <citation type="journal article" date="2008" name="Proc. Natl. Acad. Sci. U.S.A.">
        <title>A quantitative atlas of mitotic phosphorylation.</title>
        <authorList>
            <person name="Dephoure N."/>
            <person name="Zhou C."/>
            <person name="Villen J."/>
            <person name="Beausoleil S.A."/>
            <person name="Bakalarski C.E."/>
            <person name="Elledge S.J."/>
            <person name="Gygi S.P."/>
        </authorList>
    </citation>
    <scope>IDENTIFICATION BY MASS SPECTROMETRY [LARGE SCALE ANALYSIS]</scope>
    <source>
        <tissue>Cervix carcinoma</tissue>
    </source>
</reference>
<reference key="12">
    <citation type="journal article" date="2009" name="Sci. Signal.">
        <title>Quantitative phosphoproteomic analysis of T cell receptor signaling reveals system-wide modulation of protein-protein interactions.</title>
        <authorList>
            <person name="Mayya V."/>
            <person name="Lundgren D.H."/>
            <person name="Hwang S.-I."/>
            <person name="Rezaul K."/>
            <person name="Wu L."/>
            <person name="Eng J.K."/>
            <person name="Rodionov V."/>
            <person name="Han D.K."/>
        </authorList>
    </citation>
    <scope>IDENTIFICATION BY MASS SPECTROMETRY [LARGE SCALE ANALYSIS]</scope>
    <source>
        <tissue>Leukemic T-cell</tissue>
    </source>
</reference>
<reference key="13">
    <citation type="journal article" date="2010" name="Biochem. Soc. Trans.">
        <title>Cell-wide analysis of secretory granule dynamics in three dimensions in living pancreatic beta-cells: evidence against a role for AMPK-dependent phosphorylation of KLC1 at Ser517/Ser520 in glucose-stimulated insulin granule movement.</title>
        <authorList>
            <person name="McDonald A."/>
            <person name="Fogarty S."/>
            <person name="Leclerc I."/>
            <person name="Hill E.V."/>
            <person name="Hardie D.G."/>
            <person name="Rutter G.A."/>
        </authorList>
    </citation>
    <scope>PHOSPHORYLATION AT SER-521 AND SER-524</scope>
    <scope>MUTAGENESIS OF SER-521 AND SER-524</scope>
</reference>
<reference key="14">
    <citation type="journal article" date="2010" name="Sci. Signal.">
        <title>Quantitative phosphoproteomics reveals widespread full phosphorylation site occupancy during mitosis.</title>
        <authorList>
            <person name="Olsen J.V."/>
            <person name="Vermeulen M."/>
            <person name="Santamaria A."/>
            <person name="Kumar C."/>
            <person name="Miller M.L."/>
            <person name="Jensen L.J."/>
            <person name="Gnad F."/>
            <person name="Cox J."/>
            <person name="Jensen T.S."/>
            <person name="Nigg E.A."/>
            <person name="Brunak S."/>
            <person name="Mann M."/>
        </authorList>
    </citation>
    <scope>PHOSPHORYLATION [LARGE SCALE ANALYSIS] AT SER-600 (ISOFORMS I AND J)</scope>
    <scope>PHOSPHORYLATION [LARGE SCALE ANALYSIS] AT SER-631 (ISOFORM J)</scope>
    <scope>PHOSPHORYLATION [LARGE SCALE ANALYSIS] AT SER-591 AND SER-622 (ISOFORM N)</scope>
    <scope>PHOSPHORYLATION [LARGE SCALE ANALYSIS] AT SER-547 AND SER-578 (ISOFORM P)</scope>
    <scope>IDENTIFICATION BY MASS SPECTROMETRY [LARGE SCALE ANALYSIS]</scope>
    <source>
        <tissue>Cervix carcinoma</tissue>
    </source>
</reference>
<reference key="15">
    <citation type="journal article" date="2011" name="Cell Host Microbe">
        <title>Kinesin-1-mediated capsid disassembly and disruption of the nuclear pore complex promote virus infection.</title>
        <authorList>
            <person name="Strunze S."/>
            <person name="Engelke M.F."/>
            <person name="Wang I.H."/>
            <person name="Puntener D."/>
            <person name="Boucke K."/>
            <person name="Schleich S."/>
            <person name="Way M."/>
            <person name="Schoenenberger P."/>
            <person name="Burckhardt C.J."/>
            <person name="Greber U.F."/>
        </authorList>
    </citation>
    <scope>INTERACTION WITH ADENOVIRUS HEXON-INTERLACING PROTEIN (MICROBIAL INFECTION)</scope>
</reference>
<reference key="16">
    <citation type="journal article" date="2011" name="J. Cell Sci.">
        <title>Phosphorylation of kinesin light chain 1 at serine 460 modulates binding and trafficking of calsyntenin-1.</title>
        <authorList>
            <person name="Vagnoni A."/>
            <person name="Rodriguez L."/>
            <person name="Manser C."/>
            <person name="De Vos K.J."/>
            <person name="Miller C.C."/>
        </authorList>
    </citation>
    <scope>FUNCTION</scope>
    <scope>SUBCELLULAR LOCATION</scope>
    <scope>INTERACTION WITH CLSTN1</scope>
    <scope>PHOSPHORYLATION AT SER-460</scope>
    <scope>MUTAGENESIS OF SER-460</scope>
</reference>
<reference key="17">
    <citation type="journal article" date="2011" name="Sci. Signal.">
        <title>System-wide temporal characterization of the proteome and phosphoproteome of human embryonic stem cell differentiation.</title>
        <authorList>
            <person name="Rigbolt K.T."/>
            <person name="Prokhorova T.A."/>
            <person name="Akimov V."/>
            <person name="Henningsen J."/>
            <person name="Johansen P.T."/>
            <person name="Kratchmarova I."/>
            <person name="Kassem M."/>
            <person name="Mann M."/>
            <person name="Olsen J.V."/>
            <person name="Blagoev B."/>
        </authorList>
    </citation>
    <scope>PHOSPHORYLATION [LARGE SCALE ANALYSIS] AT SER-600 (ISOFORMS I AND J)</scope>
    <scope>PHOSPHORYLATION [LARGE SCALE ANALYSIS] AT SER-631 (ISOFORM J)</scope>
    <scope>PHOSPHORYLATION [LARGE SCALE ANALYSIS] AT SER-591 AND SER-622 (ISOFORM N)</scope>
    <scope>PHOSPHORYLATION [LARGE SCALE ANALYSIS] AT SER-547 AND SER-578 (ISOFORM P)</scope>
    <scope>IDENTIFICATION BY MASS SPECTROMETRY [LARGE SCALE ANALYSIS]</scope>
</reference>
<reference key="18">
    <citation type="journal article" date="2014" name="J. Proteomics">
        <title>An enzyme assisted RP-RPLC approach for in-depth analysis of human liver phosphoproteome.</title>
        <authorList>
            <person name="Bian Y."/>
            <person name="Song C."/>
            <person name="Cheng K."/>
            <person name="Dong M."/>
            <person name="Wang F."/>
            <person name="Huang J."/>
            <person name="Sun D."/>
            <person name="Wang L."/>
            <person name="Ye M."/>
            <person name="Zou H."/>
        </authorList>
    </citation>
    <scope>PHOSPHORYLATION [LARGE SCALE ANALYSIS] AT SER-600 (ISOFORMS I AND J)</scope>
    <scope>PHOSPHORYLATION [LARGE SCALE ANALYSIS] AT SER-591 (ISOFORM N)</scope>
    <scope>PHOSPHORYLATION [LARGE SCALE ANALYSIS] AT SER-547 (ISOFORM P)</scope>
    <scope>IDENTIFICATION BY MASS SPECTROMETRY [LARGE SCALE ANALYSIS]</scope>
    <source>
        <tissue>Liver</tissue>
    </source>
</reference>
<reference key="19">
    <citation type="journal article" date="2015" name="Dev. Cell">
        <title>BORC, a multisubunit complex that regulates lysosome positioning.</title>
        <authorList>
            <person name="Pu J."/>
            <person name="Schindler C."/>
            <person name="Jia R."/>
            <person name="Jarnik M."/>
            <person name="Backlund P."/>
            <person name="Bonifacino J.S."/>
        </authorList>
    </citation>
    <scope>INTERACTION WITH BORCS5</scope>
</reference>
<reference key="20">
    <citation type="submission" date="2011-05" db="PDB data bank">
        <title>Crystal structure of the TPR domain of kinesin light chain 1.</title>
        <authorList>
            <consortium name="Structural genomics consortium (SGC)"/>
        </authorList>
    </citation>
    <scope>X-RAY CRYSTALLOGRAPHY (2.8 ANGSTROMS) OF 205-497</scope>
</reference>
<keyword id="KW-0002">3D-structure</keyword>
<keyword id="KW-0025">Alternative splicing</keyword>
<keyword id="KW-0106">Calcium</keyword>
<keyword id="KW-0130">Cell adhesion</keyword>
<keyword id="KW-0966">Cell projection</keyword>
<keyword id="KW-0175">Coiled coil</keyword>
<keyword id="KW-0963">Cytoplasm</keyword>
<keyword id="KW-0968">Cytoplasmic vesicle</keyword>
<keyword id="KW-0206">Cytoskeleton</keyword>
<keyword id="KW-0945">Host-virus interaction</keyword>
<keyword id="KW-0493">Microtubule</keyword>
<keyword id="KW-0505">Motor protein</keyword>
<keyword id="KW-0597">Phosphoprotein</keyword>
<keyword id="KW-1267">Proteomics identification</keyword>
<keyword id="KW-1185">Reference proteome</keyword>
<keyword id="KW-0677">Repeat</keyword>
<keyword id="KW-0802">TPR repeat</keyword>
<feature type="chain" id="PRO_0000215092" description="Kinesin light chain 1">
    <location>
        <begin position="1"/>
        <end position="573"/>
    </location>
</feature>
<feature type="repeat" description="TPR 1">
    <location>
        <begin position="213"/>
        <end position="246"/>
    </location>
</feature>
<feature type="repeat" description="TPR 2">
    <location>
        <begin position="255"/>
        <end position="288"/>
    </location>
</feature>
<feature type="repeat" description="TPR 3">
    <location>
        <begin position="297"/>
        <end position="330"/>
    </location>
</feature>
<feature type="repeat" description="TPR 4">
    <location>
        <begin position="339"/>
        <end position="372"/>
    </location>
</feature>
<feature type="repeat" description="TPR 5">
    <location>
        <begin position="381"/>
        <end position="414"/>
    </location>
</feature>
<feature type="repeat" description="TPR 6">
    <location>
        <begin position="464"/>
        <end position="497"/>
    </location>
</feature>
<feature type="region of interest" description="Disordered" evidence="3">
    <location>
        <begin position="155"/>
        <end position="203"/>
    </location>
</feature>
<feature type="region of interest" description="Disordered" evidence="3">
    <location>
        <begin position="553"/>
        <end position="573"/>
    </location>
</feature>
<feature type="coiled-coil region">
    <location>
        <begin position="27"/>
        <end position="156"/>
    </location>
</feature>
<feature type="compositionally biased region" description="Basic and acidic residues" evidence="3">
    <location>
        <begin position="155"/>
        <end position="176"/>
    </location>
</feature>
<feature type="compositionally biased region" description="Low complexity" evidence="3">
    <location>
        <begin position="188"/>
        <end position="203"/>
    </location>
</feature>
<feature type="modified residue" description="Phosphoserine" evidence="2">
    <location>
        <position position="162"/>
    </location>
</feature>
<feature type="modified residue" description="Phosphotyrosine" evidence="1">
    <location>
        <position position="449"/>
    </location>
</feature>
<feature type="modified residue" description="Phosphoserine" evidence="6">
    <location>
        <position position="460"/>
    </location>
</feature>
<feature type="modified residue" description="Phosphoserine; by AMPK" evidence="5">
    <location>
        <position position="521"/>
    </location>
</feature>
<feature type="modified residue" description="Phosphoserine; by AMPK" evidence="5">
    <location>
        <position position="524"/>
    </location>
</feature>
<feature type="splice variant" id="VSP_008021" description="In isoform P." evidence="9">
    <original>VSMSVEWNGGVSGRASFCGKRQQQQWPGRRHR</original>
    <variation>MKRASSLNVLNVGGKAAEDRFQERNNCLADSRALSASHTDLAH</variation>
    <location>
        <begin position="542"/>
        <end position="573"/>
    </location>
</feature>
<feature type="splice variant" id="VSP_008017" description="In isoform G, isoform N and isoform S." evidence="9">
    <location>
        <begin position="542"/>
        <end position="550"/>
    </location>
</feature>
<feature type="splice variant" id="VSP_023323" description="In isoform I." evidence="9">
    <original>G</original>
    <variation>GDGTGSLKRSGSFSKLRASIRRSSEKLVRKLKGGSSRESEPKNPGMKRASSLNVLNVGGKAAEDRFQ</variation>
    <location>
        <position position="550"/>
    </location>
</feature>
<feature type="splice variant" id="VSP_008018" description="In isoform C and isoform S." evidence="9 10">
    <original>GVSGRASFCGKRQQQQWPGRRHR</original>
    <variation>MRKMKLGLVN</variation>
    <location>
        <begin position="551"/>
        <end position="573"/>
    </location>
</feature>
<feature type="splice variant" id="VSP_046424" description="In isoform D." evidence="9">
    <original>GVSGRASFCGKRQQQQWPGRRHR</original>
    <variation>DGTGSLKRSGSFSKLRASIRRSSEKLVRKLKGGSSRESEPKNPGASLAEPLFVENDSSSSGLEDATAN</variation>
    <location>
        <begin position="551"/>
        <end position="573"/>
    </location>
</feature>
<feature type="splice variant" id="VSP_008019" description="In isoform J, isoform K and isoform N." evidence="9">
    <original>G</original>
    <variation>DGTGSLKRSGSFSKLRASIRRSSEKLVRKLKGGSSRESEPKNPG</variation>
    <location>
        <position position="551"/>
    </location>
</feature>
<feature type="splice variant" id="VSP_008020" description="In isoform J and isoform N." evidence="9">
    <original>VSGRASFCGKRQQQQWPGRRHR</original>
    <variation>MKRASSLNVLNVGGKAAEDRFQERNNCLADSRALSASHTDLAH</variation>
    <location>
        <begin position="552"/>
        <end position="573"/>
    </location>
</feature>
<feature type="mutagenesis site" description="Abolished phosphorylation, leading to increased interaction with CLSTN1." evidence="6">
    <original>S</original>
    <variation>A</variation>
    <location>
        <position position="460"/>
    </location>
</feature>
<feature type="mutagenesis site" description="Mimics CLSTN1, leading to decreased interaction with CLSTN1." evidence="6">
    <original>S</original>
    <variation>D</variation>
    <location>
        <position position="460"/>
    </location>
</feature>
<feature type="mutagenesis site" description="No effect on motor function; when associated with A/D-524." evidence="5">
    <original>S</original>
    <variation>A</variation>
    <variation>D</variation>
    <location>
        <position position="521"/>
    </location>
</feature>
<feature type="mutagenesis site" description="No effect on motor function; when associated with A/D-521." evidence="5">
    <original>S</original>
    <variation>A</variation>
    <variation>D</variation>
    <location>
        <position position="524"/>
    </location>
</feature>
<feature type="sequence conflict" description="In Ref. 1; AAA16576, 2; AAO62548/AAO62549/AAO62550/AAO62551/AAO62553/AAO62552/AAO62554/AAO62555/AAO64641 and 3; AAF72543." evidence="11" ref="1 2 3">
    <original>N</original>
    <variation>T</variation>
    <location>
        <position position="4"/>
    </location>
</feature>
<feature type="strand" evidence="16">
    <location>
        <begin position="203"/>
        <end position="205"/>
    </location>
</feature>
<feature type="helix" evidence="17">
    <location>
        <begin position="211"/>
        <end position="225"/>
    </location>
</feature>
<feature type="helix" evidence="17">
    <location>
        <begin position="229"/>
        <end position="247"/>
    </location>
</feature>
<feature type="strand" evidence="17">
    <location>
        <begin position="249"/>
        <end position="251"/>
    </location>
</feature>
<feature type="helix" evidence="17">
    <location>
        <begin position="252"/>
        <end position="267"/>
    </location>
</feature>
<feature type="helix" evidence="17">
    <location>
        <begin position="271"/>
        <end position="289"/>
    </location>
</feature>
<feature type="helix" evidence="17">
    <location>
        <begin position="294"/>
        <end position="309"/>
    </location>
</feature>
<feature type="helix" evidence="17">
    <location>
        <begin position="313"/>
        <end position="331"/>
    </location>
</feature>
<feature type="helix" evidence="17">
    <location>
        <begin position="336"/>
        <end position="350"/>
    </location>
</feature>
<feature type="turn" evidence="17">
    <location>
        <begin position="351"/>
        <end position="353"/>
    </location>
</feature>
<feature type="helix" evidence="17">
    <location>
        <begin position="355"/>
        <end position="372"/>
    </location>
</feature>
<feature type="helix" evidence="17">
    <location>
        <begin position="378"/>
        <end position="394"/>
    </location>
</feature>
<feature type="helix" evidence="17">
    <location>
        <begin position="397"/>
        <end position="415"/>
    </location>
</feature>
<feature type="helix" evidence="16">
    <location>
        <begin position="426"/>
        <end position="435"/>
    </location>
</feature>
<feature type="helix" evidence="18">
    <location>
        <begin position="463"/>
        <end position="477"/>
    </location>
</feature>
<feature type="helix" evidence="18">
    <location>
        <begin position="480"/>
        <end position="494"/>
    </location>
</feature>
<feature type="modified residue" description="Phosphoserine" evidence="13 14 15">
    <location sequence="Q07866-4">
        <position position="600"/>
    </location>
</feature>
<feature type="modified residue" description="Phosphoserine" evidence="13 14">
    <location sequence="Q07866-4">
        <position position="631"/>
    </location>
</feature>
<feature type="sequence conflict" description="In Ref. 2; AAO62555." evidence="11" ref="2">
    <original>S</original>
    <variation>T</variation>
    <location sequence="Q07866-4">
        <position position="631"/>
    </location>
</feature>
<feature type="modified residue" description="Phosphoserine" evidence="13 14 15">
    <location sequence="Q07866-6">
        <position position="591"/>
    </location>
</feature>
<feature type="modified residue" description="Phosphoserine" evidence="13 14">
    <location sequence="Q07866-6">
        <position position="622"/>
    </location>
</feature>
<feature type="sequence conflict" description="In Ref. 2; AAO62551." evidence="11" ref="2">
    <original>S</original>
    <variation>T</variation>
    <location sequence="Q07866-6">
        <position position="622"/>
    </location>
</feature>
<feature type="modified residue" description="Phosphoserine" evidence="13 14 15">
    <location sequence="Q07866-7">
        <position position="547"/>
    </location>
</feature>
<feature type="modified residue" description="Phosphoserine" evidence="13 14">
    <location sequence="Q07866-7">
        <position position="578"/>
    </location>
</feature>
<feature type="modified residue" description="Phosphoserine" evidence="13 14 15">
    <location sequence="Q07866-9">
        <position position="600"/>
    </location>
</feature>
<evidence type="ECO:0000250" key="1">
    <source>
        <dbReference type="UniProtKB" id="O88447"/>
    </source>
</evidence>
<evidence type="ECO:0000250" key="2">
    <source>
        <dbReference type="UniProtKB" id="P37285"/>
    </source>
</evidence>
<evidence type="ECO:0000256" key="3">
    <source>
        <dbReference type="SAM" id="MobiDB-lite"/>
    </source>
</evidence>
<evidence type="ECO:0000269" key="4">
    <source>
    </source>
</evidence>
<evidence type="ECO:0000269" key="5">
    <source>
    </source>
</evidence>
<evidence type="ECO:0000269" key="6">
    <source>
    </source>
</evidence>
<evidence type="ECO:0000269" key="7">
    <source>
    </source>
</evidence>
<evidence type="ECO:0000269" key="8">
    <source>
    </source>
</evidence>
<evidence type="ECO:0000303" key="9">
    <source>
    </source>
</evidence>
<evidence type="ECO:0000303" key="10">
    <source>
    </source>
</evidence>
<evidence type="ECO:0000305" key="11"/>
<evidence type="ECO:0000305" key="12">
    <source>
    </source>
</evidence>
<evidence type="ECO:0007744" key="13">
    <source>
    </source>
</evidence>
<evidence type="ECO:0007744" key="14">
    <source>
    </source>
</evidence>
<evidence type="ECO:0007744" key="15">
    <source>
    </source>
</evidence>
<evidence type="ECO:0007829" key="16">
    <source>
        <dbReference type="PDB" id="3NF1"/>
    </source>
</evidence>
<evidence type="ECO:0007829" key="17">
    <source>
        <dbReference type="PDB" id="5OJ8"/>
    </source>
</evidence>
<evidence type="ECO:0007829" key="18">
    <source>
        <dbReference type="PDB" id="7AI4"/>
    </source>
</evidence>
<organism>
    <name type="scientific">Homo sapiens</name>
    <name type="common">Human</name>
    <dbReference type="NCBI Taxonomy" id="9606"/>
    <lineage>
        <taxon>Eukaryota</taxon>
        <taxon>Metazoa</taxon>
        <taxon>Chordata</taxon>
        <taxon>Craniata</taxon>
        <taxon>Vertebrata</taxon>
        <taxon>Euteleostomi</taxon>
        <taxon>Mammalia</taxon>
        <taxon>Eutheria</taxon>
        <taxon>Euarchontoglires</taxon>
        <taxon>Primates</taxon>
        <taxon>Haplorrhini</taxon>
        <taxon>Catarrhini</taxon>
        <taxon>Hominidae</taxon>
        <taxon>Homo</taxon>
    </lineage>
</organism>
<proteinExistence type="evidence at protein level"/>